<protein>
    <recommendedName>
        <fullName evidence="1">Urease accessory protein UreD 2</fullName>
    </recommendedName>
</protein>
<accession>Q4ZN11</accession>
<name>URED2_PSEU2</name>
<reference key="1">
    <citation type="journal article" date="2005" name="Proc. Natl. Acad. Sci. U.S.A.">
        <title>Comparison of the complete genome sequences of Pseudomonas syringae pv. syringae B728a and pv. tomato DC3000.</title>
        <authorList>
            <person name="Feil H."/>
            <person name="Feil W.S."/>
            <person name="Chain P."/>
            <person name="Larimer F."/>
            <person name="Dibartolo G."/>
            <person name="Copeland A."/>
            <person name="Lykidis A."/>
            <person name="Trong S."/>
            <person name="Nolan M."/>
            <person name="Goltsman E."/>
            <person name="Thiel J."/>
            <person name="Malfatti S."/>
            <person name="Loper J.E."/>
            <person name="Lapidus A."/>
            <person name="Detter J.C."/>
            <person name="Land M."/>
            <person name="Richardson P.M."/>
            <person name="Kyrpides N.C."/>
            <person name="Ivanova N."/>
            <person name="Lindow S.E."/>
        </authorList>
    </citation>
    <scope>NUCLEOTIDE SEQUENCE [LARGE SCALE GENOMIC DNA]</scope>
    <source>
        <strain>B728a</strain>
    </source>
</reference>
<feature type="chain" id="PRO_0000340494" description="Urease accessory protein UreD 2">
    <location>
        <begin position="1"/>
        <end position="281"/>
    </location>
</feature>
<comment type="function">
    <text evidence="1">Required for maturation of urease via the functional incorporation of the urease nickel metallocenter.</text>
</comment>
<comment type="subunit">
    <text evidence="1">UreD, UreF and UreG form a complex that acts as a GTP-hydrolysis-dependent molecular chaperone, activating the urease apoprotein by helping to assemble the nickel containing metallocenter of UreC. The UreE protein probably delivers the nickel.</text>
</comment>
<comment type="subcellular location">
    <subcellularLocation>
        <location evidence="1">Cytoplasm</location>
    </subcellularLocation>
</comment>
<comment type="similarity">
    <text evidence="1">Belongs to the UreD family.</text>
</comment>
<organism>
    <name type="scientific">Pseudomonas syringae pv. syringae (strain B728a)</name>
    <dbReference type="NCBI Taxonomy" id="205918"/>
    <lineage>
        <taxon>Bacteria</taxon>
        <taxon>Pseudomonadati</taxon>
        <taxon>Pseudomonadota</taxon>
        <taxon>Gammaproteobacteria</taxon>
        <taxon>Pseudomonadales</taxon>
        <taxon>Pseudomonadaceae</taxon>
        <taxon>Pseudomonas</taxon>
        <taxon>Pseudomonas syringae</taxon>
    </lineage>
</organism>
<proteinExistence type="inferred from homology"/>
<gene>
    <name evidence="1" type="primary">ureD2</name>
    <name type="ordered locus">Psyr_4431</name>
</gene>
<sequence>MNLPANTALFTPSWHAELELGYGRFDDSTRPTLRRHKGPLRVQKHLYAEGPEVCQHIIVHPPGGIAGGDRLDISATVGADAWAQLTSPGAAKWYRAASPAFQQLELHVQPGATLEWLPQESIVFSNAQAELSTRIELHGDAKLCYWDVVALGRPASGERFEHGHFQSHLDIRRDGTLLWHERQRIIGGDGLLDSPIGLDGRTVFATLLMTGEVGSELLEACRSLSMPNPVRGDLTQLPGLLVARCLADEALHARAWLIQIWKCLRPALLGREAVTPRIWNT</sequence>
<dbReference type="EMBL" id="CP000075">
    <property type="protein sequence ID" value="AAY39461.1"/>
    <property type="molecule type" value="Genomic_DNA"/>
</dbReference>
<dbReference type="RefSeq" id="WP_011269030.1">
    <property type="nucleotide sequence ID" value="NC_007005.1"/>
</dbReference>
<dbReference type="RefSeq" id="YP_237499.1">
    <property type="nucleotide sequence ID" value="NC_007005.1"/>
</dbReference>
<dbReference type="SMR" id="Q4ZN11"/>
<dbReference type="STRING" id="205918.Psyr_4431"/>
<dbReference type="KEGG" id="psb:Psyr_4431"/>
<dbReference type="PATRIC" id="fig|205918.7.peg.4573"/>
<dbReference type="eggNOG" id="COG0829">
    <property type="taxonomic scope" value="Bacteria"/>
</dbReference>
<dbReference type="HOGENOM" id="CLU_056339_0_0_6"/>
<dbReference type="OrthoDB" id="9798842at2"/>
<dbReference type="Proteomes" id="UP000000426">
    <property type="component" value="Chromosome"/>
</dbReference>
<dbReference type="GO" id="GO:0005737">
    <property type="term" value="C:cytoplasm"/>
    <property type="evidence" value="ECO:0007669"/>
    <property type="project" value="UniProtKB-SubCell"/>
</dbReference>
<dbReference type="GO" id="GO:0016151">
    <property type="term" value="F:nickel cation binding"/>
    <property type="evidence" value="ECO:0007669"/>
    <property type="project" value="UniProtKB-UniRule"/>
</dbReference>
<dbReference type="HAMAP" id="MF_01384">
    <property type="entry name" value="UreD"/>
    <property type="match status" value="1"/>
</dbReference>
<dbReference type="InterPro" id="IPR002669">
    <property type="entry name" value="UreD"/>
</dbReference>
<dbReference type="PANTHER" id="PTHR33643">
    <property type="entry name" value="UREASE ACCESSORY PROTEIN D"/>
    <property type="match status" value="1"/>
</dbReference>
<dbReference type="PANTHER" id="PTHR33643:SF1">
    <property type="entry name" value="UREASE ACCESSORY PROTEIN D"/>
    <property type="match status" value="1"/>
</dbReference>
<dbReference type="Pfam" id="PF01774">
    <property type="entry name" value="UreD"/>
    <property type="match status" value="1"/>
</dbReference>
<keyword id="KW-0143">Chaperone</keyword>
<keyword id="KW-0963">Cytoplasm</keyword>
<keyword id="KW-0996">Nickel insertion</keyword>
<evidence type="ECO:0000255" key="1">
    <source>
        <dbReference type="HAMAP-Rule" id="MF_01384"/>
    </source>
</evidence>